<proteinExistence type="inferred from homology"/>
<organism>
    <name type="scientific">Sulfurimonas denitrificans (strain ATCC 33889 / DSM 1251)</name>
    <name type="common">Thiomicrospira denitrificans (strain ATCC 33889 / DSM 1251)</name>
    <dbReference type="NCBI Taxonomy" id="326298"/>
    <lineage>
        <taxon>Bacteria</taxon>
        <taxon>Pseudomonadati</taxon>
        <taxon>Campylobacterota</taxon>
        <taxon>Epsilonproteobacteria</taxon>
        <taxon>Campylobacterales</taxon>
        <taxon>Sulfurimonadaceae</taxon>
        <taxon>Sulfurimonas</taxon>
    </lineage>
</organism>
<reference key="1">
    <citation type="journal article" date="2008" name="Appl. Environ. Microbiol.">
        <title>Genome of the epsilonproteobacterial chemolithoautotroph Sulfurimonas denitrificans.</title>
        <authorList>
            <person name="Sievert S.M."/>
            <person name="Scott K.M."/>
            <person name="Klotz M.G."/>
            <person name="Chain P.S.G."/>
            <person name="Hauser L.J."/>
            <person name="Hemp J."/>
            <person name="Huegler M."/>
            <person name="Land M."/>
            <person name="Lapidus A."/>
            <person name="Larimer F.W."/>
            <person name="Lucas S."/>
            <person name="Malfatti S.A."/>
            <person name="Meyer F."/>
            <person name="Paulsen I.T."/>
            <person name="Ren Q."/>
            <person name="Simon J."/>
            <person name="Bailey K."/>
            <person name="Diaz E."/>
            <person name="Fitzpatrick K.A."/>
            <person name="Glover B."/>
            <person name="Gwatney N."/>
            <person name="Korajkic A."/>
            <person name="Long A."/>
            <person name="Mobberley J.M."/>
            <person name="Pantry S.N."/>
            <person name="Pazder G."/>
            <person name="Peterson S."/>
            <person name="Quintanilla J.D."/>
            <person name="Sprinkle R."/>
            <person name="Stephens J."/>
            <person name="Thomas P."/>
            <person name="Vaughn R."/>
            <person name="Weber M.J."/>
            <person name="Wooten L.L."/>
        </authorList>
    </citation>
    <scope>NUCLEOTIDE SEQUENCE [LARGE SCALE GENOMIC DNA]</scope>
    <source>
        <strain>ATCC 33889 / DSM 1251</strain>
    </source>
</reference>
<accession>Q30TU3</accession>
<dbReference type="EMBL" id="CP000153">
    <property type="protein sequence ID" value="ABB43588.1"/>
    <property type="molecule type" value="Genomic_DNA"/>
</dbReference>
<dbReference type="RefSeq" id="WP_008338996.1">
    <property type="nucleotide sequence ID" value="NC_007575.1"/>
</dbReference>
<dbReference type="SMR" id="Q30TU3"/>
<dbReference type="STRING" id="326298.Suden_0307"/>
<dbReference type="KEGG" id="tdn:Suden_0307"/>
<dbReference type="eggNOG" id="COG0361">
    <property type="taxonomic scope" value="Bacteria"/>
</dbReference>
<dbReference type="HOGENOM" id="CLU_151267_1_0_7"/>
<dbReference type="OrthoDB" id="9803250at2"/>
<dbReference type="Proteomes" id="UP000002714">
    <property type="component" value="Chromosome"/>
</dbReference>
<dbReference type="GO" id="GO:0005829">
    <property type="term" value="C:cytosol"/>
    <property type="evidence" value="ECO:0007669"/>
    <property type="project" value="TreeGrafter"/>
</dbReference>
<dbReference type="GO" id="GO:0043022">
    <property type="term" value="F:ribosome binding"/>
    <property type="evidence" value="ECO:0007669"/>
    <property type="project" value="UniProtKB-UniRule"/>
</dbReference>
<dbReference type="GO" id="GO:0019843">
    <property type="term" value="F:rRNA binding"/>
    <property type="evidence" value="ECO:0007669"/>
    <property type="project" value="UniProtKB-UniRule"/>
</dbReference>
<dbReference type="GO" id="GO:0003743">
    <property type="term" value="F:translation initiation factor activity"/>
    <property type="evidence" value="ECO:0007669"/>
    <property type="project" value="UniProtKB-UniRule"/>
</dbReference>
<dbReference type="CDD" id="cd04451">
    <property type="entry name" value="S1_IF1"/>
    <property type="match status" value="1"/>
</dbReference>
<dbReference type="FunFam" id="2.40.50.140:FF:000002">
    <property type="entry name" value="Translation initiation factor IF-1"/>
    <property type="match status" value="1"/>
</dbReference>
<dbReference type="Gene3D" id="2.40.50.140">
    <property type="entry name" value="Nucleic acid-binding proteins"/>
    <property type="match status" value="1"/>
</dbReference>
<dbReference type="HAMAP" id="MF_00075">
    <property type="entry name" value="IF_1"/>
    <property type="match status" value="1"/>
</dbReference>
<dbReference type="InterPro" id="IPR012340">
    <property type="entry name" value="NA-bd_OB-fold"/>
</dbReference>
<dbReference type="InterPro" id="IPR006196">
    <property type="entry name" value="RNA-binding_domain_S1_IF1"/>
</dbReference>
<dbReference type="InterPro" id="IPR003029">
    <property type="entry name" value="S1_domain"/>
</dbReference>
<dbReference type="InterPro" id="IPR004368">
    <property type="entry name" value="TIF_IF1"/>
</dbReference>
<dbReference type="NCBIfam" id="TIGR00008">
    <property type="entry name" value="infA"/>
    <property type="match status" value="1"/>
</dbReference>
<dbReference type="PANTHER" id="PTHR33370">
    <property type="entry name" value="TRANSLATION INITIATION FACTOR IF-1, CHLOROPLASTIC"/>
    <property type="match status" value="1"/>
</dbReference>
<dbReference type="PANTHER" id="PTHR33370:SF1">
    <property type="entry name" value="TRANSLATION INITIATION FACTOR IF-1, CHLOROPLASTIC"/>
    <property type="match status" value="1"/>
</dbReference>
<dbReference type="Pfam" id="PF01176">
    <property type="entry name" value="eIF-1a"/>
    <property type="match status" value="1"/>
</dbReference>
<dbReference type="SMART" id="SM00316">
    <property type="entry name" value="S1"/>
    <property type="match status" value="1"/>
</dbReference>
<dbReference type="SUPFAM" id="SSF50249">
    <property type="entry name" value="Nucleic acid-binding proteins"/>
    <property type="match status" value="1"/>
</dbReference>
<dbReference type="PROSITE" id="PS50832">
    <property type="entry name" value="S1_IF1_TYPE"/>
    <property type="match status" value="1"/>
</dbReference>
<name>IF1_SULDN</name>
<keyword id="KW-0963">Cytoplasm</keyword>
<keyword id="KW-0396">Initiation factor</keyword>
<keyword id="KW-0648">Protein biosynthesis</keyword>
<keyword id="KW-1185">Reference proteome</keyword>
<keyword id="KW-0694">RNA-binding</keyword>
<keyword id="KW-0699">rRNA-binding</keyword>
<comment type="function">
    <text evidence="1">One of the essential components for the initiation of protein synthesis. Stabilizes the binding of IF-2 and IF-3 on the 30S subunit to which N-formylmethionyl-tRNA(fMet) subsequently binds. Helps modulate mRNA selection, yielding the 30S pre-initiation complex (PIC). Upon addition of the 50S ribosomal subunit IF-1, IF-2 and IF-3 are released leaving the mature 70S translation initiation complex.</text>
</comment>
<comment type="subunit">
    <text evidence="1">Component of the 30S ribosomal translation pre-initiation complex which assembles on the 30S ribosome in the order IF-2 and IF-3, IF-1 and N-formylmethionyl-tRNA(fMet); mRNA recruitment can occur at any time during PIC assembly.</text>
</comment>
<comment type="subcellular location">
    <subcellularLocation>
        <location evidence="1">Cytoplasm</location>
    </subcellularLocation>
</comment>
<comment type="similarity">
    <text evidence="1">Belongs to the IF-1 family.</text>
</comment>
<feature type="chain" id="PRO_0000263895" description="Translation initiation factor IF-1">
    <location>
        <begin position="1"/>
        <end position="72"/>
    </location>
</feature>
<feature type="domain" description="S1-like" evidence="1">
    <location>
        <begin position="1"/>
        <end position="72"/>
    </location>
</feature>
<protein>
    <recommendedName>
        <fullName evidence="1">Translation initiation factor IF-1</fullName>
    </recommendedName>
</protein>
<evidence type="ECO:0000255" key="1">
    <source>
        <dbReference type="HAMAP-Rule" id="MF_00075"/>
    </source>
</evidence>
<sequence length="72" mass="8256">MAKSDVIEVDGKIIEALPNATFRVELENGHIILCHIAGKMRMHYIKILPGDKVKLELTPYSLDKGRITYRYK</sequence>
<gene>
    <name evidence="1" type="primary">infA</name>
    <name type="ordered locus">Suden_0307</name>
</gene>